<reference key="1">
    <citation type="journal article" date="1990" name="Virology">
        <title>The complete DNA sequence of vaccinia virus.</title>
        <authorList>
            <person name="Goebel S.J."/>
            <person name="Johnson G.P."/>
            <person name="Perkus M.E."/>
            <person name="Davis S.W."/>
            <person name="Winslow J.P."/>
            <person name="Paoletti E."/>
        </authorList>
    </citation>
    <scope>NUCLEOTIDE SEQUENCE [LARGE SCALE GENOMIC DNA]</scope>
</reference>
<reference key="2">
    <citation type="journal article" date="1990" name="Virology">
        <title>Appendix to 'The complete DNA sequence of vaccinia virus'.</title>
        <authorList>
            <person name="Goebel S.J."/>
            <person name="Johnson G.P."/>
            <person name="Perkus M.E."/>
            <person name="Davis S.W."/>
            <person name="Winslow J.P."/>
            <person name="Paoletti E."/>
        </authorList>
    </citation>
    <scope>COMPLETE GENOME</scope>
</reference>
<sequence length="71" mass="8074">MNVSIPHSFTMTLKEINRSIIYSTTNSVISALLMYNLLTIISTTYLSVSFRRVMFGFNSPKHTNSKLILTD</sequence>
<dbReference type="EMBL" id="M35027">
    <property type="protein sequence ID" value="AAA48087.1"/>
    <property type="molecule type" value="Genomic_DNA"/>
</dbReference>
<dbReference type="PIR" id="H42514">
    <property type="entry name" value="H42514"/>
</dbReference>
<dbReference type="Proteomes" id="UP000008269">
    <property type="component" value="Segment"/>
</dbReference>
<dbReference type="InterPro" id="IPR020104">
    <property type="entry name" value="DUF5438"/>
</dbReference>
<dbReference type="Pfam" id="PF17506">
    <property type="entry name" value="DUF5438"/>
    <property type="match status" value="1"/>
</dbReference>
<feature type="chain" id="PRO_0000099719" description="Uncharacterized 8.1 kDa protein">
    <location>
        <begin position="1"/>
        <end position="71"/>
    </location>
</feature>
<organismHost>
    <name type="scientific">Homo sapiens</name>
    <name type="common">Human</name>
    <dbReference type="NCBI Taxonomy" id="9606"/>
</organismHost>
<proteinExistence type="predicted"/>
<keyword id="KW-1185">Reference proteome</keyword>
<protein>
    <recommendedName>
        <fullName>Uncharacterized 8.1 kDa protein</fullName>
    </recommendedName>
</protein>
<organism>
    <name type="scientific">Vaccinia virus (strain Copenhagen)</name>
    <name type="common">VACV</name>
    <dbReference type="NCBI Taxonomy" id="10249"/>
    <lineage>
        <taxon>Viruses</taxon>
        <taxon>Varidnaviria</taxon>
        <taxon>Bamfordvirae</taxon>
        <taxon>Nucleocytoviricota</taxon>
        <taxon>Pokkesviricetes</taxon>
        <taxon>Chitovirales</taxon>
        <taxon>Poxviridae</taxon>
        <taxon>Chordopoxvirinae</taxon>
        <taxon>Orthopoxvirus</taxon>
        <taxon>Vaccinia virus</taxon>
    </lineage>
</organism>
<accession>P20567</accession>
<gene>
    <name type="ORF">H ORF A</name>
</gene>
<name>YVHA_VACCC</name>